<accession>Q07978</accession>
<accession>D6VY33</accession>
<protein>
    <recommendedName>
        <fullName>Putative uncharacterized protein YLR031W</fullName>
    </recommendedName>
</protein>
<dbReference type="EMBL" id="Z73203">
    <property type="protein sequence ID" value="CAA97555.1"/>
    <property type="molecule type" value="Genomic_DNA"/>
</dbReference>
<dbReference type="EMBL" id="BK006945">
    <property type="protein sequence ID" value="DAA09349.1"/>
    <property type="molecule type" value="Genomic_DNA"/>
</dbReference>
<dbReference type="PIR" id="S64858">
    <property type="entry name" value="S64858"/>
</dbReference>
<dbReference type="RefSeq" id="NP_013131.1">
    <property type="nucleotide sequence ID" value="NM_001181918.1"/>
</dbReference>
<dbReference type="SMR" id="Q07978"/>
<dbReference type="BioGRID" id="31305">
    <property type="interactions" value="62"/>
</dbReference>
<dbReference type="DIP" id="DIP-4435N"/>
<dbReference type="FunCoup" id="Q07978">
    <property type="interactions" value="59"/>
</dbReference>
<dbReference type="IntAct" id="Q07978">
    <property type="interactions" value="5"/>
</dbReference>
<dbReference type="STRING" id="4932.YLR031W"/>
<dbReference type="iPTMnet" id="Q07978"/>
<dbReference type="PaxDb" id="4932-YLR031W"/>
<dbReference type="EnsemblFungi" id="YLR031W_mRNA">
    <property type="protein sequence ID" value="YLR031W"/>
    <property type="gene ID" value="YLR031W"/>
</dbReference>
<dbReference type="GeneID" id="850718"/>
<dbReference type="KEGG" id="sce:YLR031W"/>
<dbReference type="AGR" id="SGD:S000004021"/>
<dbReference type="SGD" id="S000004021">
    <property type="gene designation" value="YLR031W"/>
</dbReference>
<dbReference type="VEuPathDB" id="FungiDB:YLR031W"/>
<dbReference type="HOGENOM" id="CLU_1497054_0_0_1"/>
<dbReference type="InParanoid" id="Q07978"/>
<dbReference type="OrthoDB" id="4051753at2759"/>
<dbReference type="BioCyc" id="YEAST:G3O-32190-MONOMER"/>
<dbReference type="PRO" id="PR:Q07978"/>
<dbReference type="Proteomes" id="UP000002311">
    <property type="component" value="Chromosome XII"/>
</dbReference>
<dbReference type="RNAct" id="Q07978">
    <property type="molecule type" value="protein"/>
</dbReference>
<sequence>MPVLNTRTSYPNIDFHGTKVSDVLDAFEFEKHDDPLRDKWNTLQFLEKSFESKFESASELIQGGELAAIKERNFQLAKLNNLCFRVRESIKRRQDLEKKLRTLSQDTDNELLFLMLENERRKKSSVIIEFLSEIIREKSKRLTAEEQGFVNQNEVKPLILDLSARINRLNSILETKNTCIRRLSNQ</sequence>
<name>YL031_YEAST</name>
<reference key="1">
    <citation type="journal article" date="1997" name="Nature">
        <title>The nucleotide sequence of Saccharomyces cerevisiae chromosome XII.</title>
        <authorList>
            <person name="Johnston M."/>
            <person name="Hillier L.W."/>
            <person name="Riles L."/>
            <person name="Albermann K."/>
            <person name="Andre B."/>
            <person name="Ansorge W."/>
            <person name="Benes V."/>
            <person name="Brueckner M."/>
            <person name="Delius H."/>
            <person name="Dubois E."/>
            <person name="Duesterhoeft A."/>
            <person name="Entian K.-D."/>
            <person name="Floeth M."/>
            <person name="Goffeau A."/>
            <person name="Hebling U."/>
            <person name="Heumann K."/>
            <person name="Heuss-Neitzel D."/>
            <person name="Hilbert H."/>
            <person name="Hilger F."/>
            <person name="Kleine K."/>
            <person name="Koetter P."/>
            <person name="Louis E.J."/>
            <person name="Messenguy F."/>
            <person name="Mewes H.-W."/>
            <person name="Miosga T."/>
            <person name="Moestl D."/>
            <person name="Mueller-Auer S."/>
            <person name="Nentwich U."/>
            <person name="Obermaier B."/>
            <person name="Piravandi E."/>
            <person name="Pohl T.M."/>
            <person name="Portetelle D."/>
            <person name="Purnelle B."/>
            <person name="Rechmann S."/>
            <person name="Rieger M."/>
            <person name="Rinke M."/>
            <person name="Rose M."/>
            <person name="Scharfe M."/>
            <person name="Scherens B."/>
            <person name="Scholler P."/>
            <person name="Schwager C."/>
            <person name="Schwarz S."/>
            <person name="Underwood A.P."/>
            <person name="Urrestarazu L.A."/>
            <person name="Vandenbol M."/>
            <person name="Verhasselt P."/>
            <person name="Vierendeels F."/>
            <person name="Voet M."/>
            <person name="Volckaert G."/>
            <person name="Voss H."/>
            <person name="Wambutt R."/>
            <person name="Wedler E."/>
            <person name="Wedler H."/>
            <person name="Zimmermann F.K."/>
            <person name="Zollner A."/>
            <person name="Hani J."/>
            <person name="Hoheisel J.D."/>
        </authorList>
    </citation>
    <scope>NUCLEOTIDE SEQUENCE [LARGE SCALE GENOMIC DNA]</scope>
    <source>
        <strain>ATCC 204508 / S288c</strain>
    </source>
</reference>
<reference key="2">
    <citation type="journal article" date="2014" name="G3 (Bethesda)">
        <title>The reference genome sequence of Saccharomyces cerevisiae: Then and now.</title>
        <authorList>
            <person name="Engel S.R."/>
            <person name="Dietrich F.S."/>
            <person name="Fisk D.G."/>
            <person name="Binkley G."/>
            <person name="Balakrishnan R."/>
            <person name="Costanzo M.C."/>
            <person name="Dwight S.S."/>
            <person name="Hitz B.C."/>
            <person name="Karra K."/>
            <person name="Nash R.S."/>
            <person name="Weng S."/>
            <person name="Wong E.D."/>
            <person name="Lloyd P."/>
            <person name="Skrzypek M.S."/>
            <person name="Miyasato S.R."/>
            <person name="Simison M."/>
            <person name="Cherry J.M."/>
        </authorList>
    </citation>
    <scope>GENOME REANNOTATION</scope>
    <source>
        <strain>ATCC 204508 / S288c</strain>
    </source>
</reference>
<feature type="chain" id="PRO_0000247174" description="Putative uncharacterized protein YLR031W">
    <location>
        <begin position="1"/>
        <end position="186"/>
    </location>
</feature>
<gene>
    <name type="ordered locus">YLR031W</name>
</gene>
<keyword id="KW-1185">Reference proteome</keyword>
<proteinExistence type="predicted"/>
<organism>
    <name type="scientific">Saccharomyces cerevisiae (strain ATCC 204508 / S288c)</name>
    <name type="common">Baker's yeast</name>
    <dbReference type="NCBI Taxonomy" id="559292"/>
    <lineage>
        <taxon>Eukaryota</taxon>
        <taxon>Fungi</taxon>
        <taxon>Dikarya</taxon>
        <taxon>Ascomycota</taxon>
        <taxon>Saccharomycotina</taxon>
        <taxon>Saccharomycetes</taxon>
        <taxon>Saccharomycetales</taxon>
        <taxon>Saccharomycetaceae</taxon>
        <taxon>Saccharomyces</taxon>
    </lineage>
</organism>